<keyword id="KW-1185">Reference proteome</keyword>
<keyword id="KW-0687">Ribonucleoprotein</keyword>
<keyword id="KW-0689">Ribosomal protein</keyword>
<keyword id="KW-0694">RNA-binding</keyword>
<keyword id="KW-0699">rRNA-binding</keyword>
<reference key="1">
    <citation type="journal article" date="2002" name="Proc. Natl. Acad. Sci. U.S.A.">
        <title>Genome sequence of Streptococcus mutans UA159, a cariogenic dental pathogen.</title>
        <authorList>
            <person name="Ajdic D.J."/>
            <person name="McShan W.M."/>
            <person name="McLaughlin R.E."/>
            <person name="Savic G."/>
            <person name="Chang J."/>
            <person name="Carson M.B."/>
            <person name="Primeaux C."/>
            <person name="Tian R."/>
            <person name="Kenton S."/>
            <person name="Jia H.G."/>
            <person name="Lin S.P."/>
            <person name="Qian Y."/>
            <person name="Li S."/>
            <person name="Zhu H."/>
            <person name="Najar F.Z."/>
            <person name="Lai H."/>
            <person name="White J."/>
            <person name="Roe B.A."/>
            <person name="Ferretti J.J."/>
        </authorList>
    </citation>
    <scope>NUCLEOTIDE SEQUENCE [LARGE SCALE GENOMIC DNA]</scope>
    <source>
        <strain>ATCC 700610 / UA159</strain>
    </source>
</reference>
<gene>
    <name evidence="1" type="primary">rplJ</name>
    <name type="ordered locus">SMU_957</name>
</gene>
<proteinExistence type="inferred from homology"/>
<sequence length="167" mass="17667">MSEASIAKKAELVDAVAEKMKAAVSIVVVDSRGLTVEQDTVLRRNLRESAVEFKVIKNSILRRAAEKAGLEGFDDIFTGPSAVAFSNEDVVAPAKIINDFAKDAEALEIKGGAIEGAVSTKEEIQALAALPNREGLLSMLLSVLQAPVRNVAYAVKAVAESKDEDAA</sequence>
<organism>
    <name type="scientific">Streptococcus mutans serotype c (strain ATCC 700610 / UA159)</name>
    <dbReference type="NCBI Taxonomy" id="210007"/>
    <lineage>
        <taxon>Bacteria</taxon>
        <taxon>Bacillati</taxon>
        <taxon>Bacillota</taxon>
        <taxon>Bacilli</taxon>
        <taxon>Lactobacillales</taxon>
        <taxon>Streptococcaceae</taxon>
        <taxon>Streptococcus</taxon>
    </lineage>
</organism>
<comment type="function">
    <text evidence="1">Forms part of the ribosomal stalk, playing a central role in the interaction of the ribosome with GTP-bound translation factors.</text>
</comment>
<comment type="subunit">
    <text evidence="1">Part of the ribosomal stalk of the 50S ribosomal subunit. The N-terminus interacts with L11 and the large rRNA to form the base of the stalk. The C-terminus forms an elongated spine to which L12 dimers bind in a sequential fashion forming a multimeric L10(L12)X complex.</text>
</comment>
<comment type="similarity">
    <text evidence="1">Belongs to the universal ribosomal protein uL10 family.</text>
</comment>
<evidence type="ECO:0000255" key="1">
    <source>
        <dbReference type="HAMAP-Rule" id="MF_00362"/>
    </source>
</evidence>
<evidence type="ECO:0000305" key="2"/>
<accession>Q8DUH2</accession>
<protein>
    <recommendedName>
        <fullName evidence="1">Large ribosomal subunit protein uL10</fullName>
    </recommendedName>
    <alternativeName>
        <fullName evidence="2">50S ribosomal protein L10</fullName>
    </alternativeName>
</protein>
<dbReference type="EMBL" id="AE014133">
    <property type="protein sequence ID" value="AAN58661.1"/>
    <property type="molecule type" value="Genomic_DNA"/>
</dbReference>
<dbReference type="RefSeq" id="NP_721355.1">
    <property type="nucleotide sequence ID" value="NC_004350.2"/>
</dbReference>
<dbReference type="RefSeq" id="WP_002262824.1">
    <property type="nucleotide sequence ID" value="NC_004350.2"/>
</dbReference>
<dbReference type="SMR" id="Q8DUH2"/>
<dbReference type="STRING" id="210007.SMU_957"/>
<dbReference type="GeneID" id="93859527"/>
<dbReference type="KEGG" id="smu:SMU_957"/>
<dbReference type="PATRIC" id="fig|210007.7.peg.854"/>
<dbReference type="eggNOG" id="COG0244">
    <property type="taxonomic scope" value="Bacteria"/>
</dbReference>
<dbReference type="HOGENOM" id="CLU_092227_2_0_9"/>
<dbReference type="OrthoDB" id="9808307at2"/>
<dbReference type="PhylomeDB" id="Q8DUH2"/>
<dbReference type="Proteomes" id="UP000002512">
    <property type="component" value="Chromosome"/>
</dbReference>
<dbReference type="GO" id="GO:0015934">
    <property type="term" value="C:large ribosomal subunit"/>
    <property type="evidence" value="ECO:0007669"/>
    <property type="project" value="InterPro"/>
</dbReference>
<dbReference type="GO" id="GO:0070180">
    <property type="term" value="F:large ribosomal subunit rRNA binding"/>
    <property type="evidence" value="ECO:0007669"/>
    <property type="project" value="UniProtKB-UniRule"/>
</dbReference>
<dbReference type="GO" id="GO:0003735">
    <property type="term" value="F:structural constituent of ribosome"/>
    <property type="evidence" value="ECO:0007669"/>
    <property type="project" value="InterPro"/>
</dbReference>
<dbReference type="GO" id="GO:0006412">
    <property type="term" value="P:translation"/>
    <property type="evidence" value="ECO:0007669"/>
    <property type="project" value="UniProtKB-UniRule"/>
</dbReference>
<dbReference type="CDD" id="cd05797">
    <property type="entry name" value="Ribosomal_L10"/>
    <property type="match status" value="1"/>
</dbReference>
<dbReference type="FunFam" id="3.30.70.1730:FF:000001">
    <property type="entry name" value="50S ribosomal protein L10"/>
    <property type="match status" value="1"/>
</dbReference>
<dbReference type="Gene3D" id="3.30.70.1730">
    <property type="match status" value="1"/>
</dbReference>
<dbReference type="HAMAP" id="MF_00362">
    <property type="entry name" value="Ribosomal_uL10"/>
    <property type="match status" value="1"/>
</dbReference>
<dbReference type="InterPro" id="IPR001790">
    <property type="entry name" value="Ribosomal_uL10"/>
</dbReference>
<dbReference type="InterPro" id="IPR043141">
    <property type="entry name" value="Ribosomal_uL10-like_sf"/>
</dbReference>
<dbReference type="InterPro" id="IPR022973">
    <property type="entry name" value="Ribosomal_uL10_bac"/>
</dbReference>
<dbReference type="InterPro" id="IPR047865">
    <property type="entry name" value="Ribosomal_uL10_bac_type"/>
</dbReference>
<dbReference type="InterPro" id="IPR002363">
    <property type="entry name" value="Ribosomal_uL10_CS_bac"/>
</dbReference>
<dbReference type="NCBIfam" id="NF000955">
    <property type="entry name" value="PRK00099.1-1"/>
    <property type="match status" value="1"/>
</dbReference>
<dbReference type="PANTHER" id="PTHR11560">
    <property type="entry name" value="39S RIBOSOMAL PROTEIN L10, MITOCHONDRIAL"/>
    <property type="match status" value="1"/>
</dbReference>
<dbReference type="Pfam" id="PF00466">
    <property type="entry name" value="Ribosomal_L10"/>
    <property type="match status" value="1"/>
</dbReference>
<dbReference type="SUPFAM" id="SSF160369">
    <property type="entry name" value="Ribosomal protein L10-like"/>
    <property type="match status" value="1"/>
</dbReference>
<dbReference type="PROSITE" id="PS01109">
    <property type="entry name" value="RIBOSOMAL_L10"/>
    <property type="match status" value="1"/>
</dbReference>
<feature type="chain" id="PRO_0000154721" description="Large ribosomal subunit protein uL10">
    <location>
        <begin position="1"/>
        <end position="167"/>
    </location>
</feature>
<name>RL10_STRMU</name>